<comment type="function">
    <text evidence="2">Component of the cytochrome c oxidase, the last enzyme in the mitochondrial electron transport chain which drives oxidative phosphorylation. The respiratory chain contains 3 multisubunit complexes succinate dehydrogenase (complex II, CII), ubiquinol-cytochrome c oxidoreductase (cytochrome b-c1 complex, complex III, CIII) and cytochrome c oxidase (complex IV, CIV), that cooperate to transfer electrons derived from NADH and succinate to molecular oxygen, creating an electrochemical gradient over the inner membrane that drives transmembrane transport and the ATP synthase. Cytochrome c oxidase is the component of the respiratory chain that catalyzes the reduction of oxygen to water. Electrons originating from reduced cytochrome c in the intermembrane space (IMS) are transferred via the dinuclear copper A center (CU(A)) of subunit 2 and heme A of subunit 1 to the active site in subunit 1, a binuclear center (BNC) formed by heme A3 and copper B (CU(B)). The BNC reduces molecular oxygen to 2 water molecules using 4 electrons from cytochrome c in the IMS and 4 protons from the mitochondrial matrix.</text>
</comment>
<comment type="catalytic activity">
    <reaction evidence="2">
        <text>4 Fe(II)-[cytochrome c] + O2 + 8 H(+)(in) = 4 Fe(III)-[cytochrome c] + 2 H2O + 4 H(+)(out)</text>
        <dbReference type="Rhea" id="RHEA:11436"/>
        <dbReference type="Rhea" id="RHEA-COMP:10350"/>
        <dbReference type="Rhea" id="RHEA-COMP:14399"/>
        <dbReference type="ChEBI" id="CHEBI:15377"/>
        <dbReference type="ChEBI" id="CHEBI:15378"/>
        <dbReference type="ChEBI" id="CHEBI:15379"/>
        <dbReference type="ChEBI" id="CHEBI:29033"/>
        <dbReference type="ChEBI" id="CHEBI:29034"/>
        <dbReference type="EC" id="7.1.1.9"/>
    </reaction>
    <physiologicalReaction direction="left-to-right" evidence="2">
        <dbReference type="Rhea" id="RHEA:11437"/>
    </physiologicalReaction>
</comment>
<comment type="cofactor">
    <cofactor evidence="3">
        <name>Cu cation</name>
        <dbReference type="ChEBI" id="CHEBI:23378"/>
    </cofactor>
    <text evidence="3">Binds a dinuclear copper A center per subunit.</text>
</comment>
<comment type="subunit">
    <text evidence="1 3">Component of the cytochrome c oxidase (complex IV, CIV), a multisubunit enzyme composed of 14 subunits. The complex is composed of a catalytic core of 3 subunits MT-CO1, MT-CO2 and MT-CO3, encoded in the mitochondrial DNA, and 11 supernumerary subunits COX4I, COX5A, COX5B, COX6A, COX6B, COX6C, COX7A, COX7B, COX7C, COX8 and NDUFA4, which are encoded in the nuclear genome. The complex exists as a monomer or a dimer and forms supercomplexes (SCs) in the inner mitochondrial membrane with NADH-ubiquinone oxidoreductase (complex I, CI) and ubiquinol-cytochrome c oxidoreductase (cytochrome b-c1 complex, complex III, CIII), resulting in different assemblies (supercomplex SCI(1)III(2)IV(1) and megacomplex MCI(2)III(2)IV(2)) (By similarity). Found in a complex with TMEM177, COA6, COX18, COX20, SCO1 and SCO2. Interacts with TMEM177 in a COX20-dependent manner. Interacts with COX20. Interacts with COX16 (By similarity).</text>
</comment>
<comment type="subcellular location">
    <subcellularLocation>
        <location evidence="3">Mitochondrion inner membrane</location>
        <topology evidence="3">Multi-pass membrane protein</topology>
    </subcellularLocation>
</comment>
<comment type="similarity">
    <text evidence="4">Belongs to the cytochrome c oxidase subunit 2 family.</text>
</comment>
<protein>
    <recommendedName>
        <fullName>Cytochrome c oxidase subunit 2</fullName>
        <ecNumber>7.1.1.9</ecNumber>
    </recommendedName>
    <alternativeName>
        <fullName>Cytochrome c oxidase polypeptide II</fullName>
    </alternativeName>
</protein>
<feature type="chain" id="PRO_0000257853" description="Cytochrome c oxidase subunit 2">
    <location>
        <begin position="1"/>
        <end position="227"/>
    </location>
</feature>
<feature type="topological domain" description="Mitochondrial intermembrane" evidence="3">
    <location>
        <begin position="1"/>
        <end position="14"/>
    </location>
</feature>
<feature type="transmembrane region" description="Helical; Name=I" evidence="3">
    <location>
        <begin position="15"/>
        <end position="45"/>
    </location>
</feature>
<feature type="topological domain" description="Mitochondrial matrix" evidence="3">
    <location>
        <begin position="46"/>
        <end position="59"/>
    </location>
</feature>
<feature type="transmembrane region" description="Helical; Name=II" evidence="3">
    <location>
        <begin position="60"/>
        <end position="87"/>
    </location>
</feature>
<feature type="topological domain" description="Mitochondrial intermembrane" evidence="3">
    <location>
        <begin position="88"/>
        <end position="227"/>
    </location>
</feature>
<feature type="binding site" evidence="3">
    <location>
        <position position="161"/>
    </location>
    <ligand>
        <name>Cu cation</name>
        <dbReference type="ChEBI" id="CHEBI:23378"/>
        <label>A1</label>
    </ligand>
</feature>
<feature type="binding site" evidence="3">
    <location>
        <position position="196"/>
    </location>
    <ligand>
        <name>Cu cation</name>
        <dbReference type="ChEBI" id="CHEBI:23378"/>
        <label>A1</label>
    </ligand>
</feature>
<feature type="binding site" evidence="3">
    <location>
        <position position="196"/>
    </location>
    <ligand>
        <name>Cu cation</name>
        <dbReference type="ChEBI" id="CHEBI:23378"/>
        <label>A2</label>
    </ligand>
</feature>
<feature type="binding site" evidence="3">
    <location>
        <position position="198"/>
    </location>
    <ligand>
        <name>Cu cation</name>
        <dbReference type="ChEBI" id="CHEBI:23378"/>
        <label>A2</label>
    </ligand>
</feature>
<feature type="binding site" evidence="3">
    <location>
        <position position="198"/>
    </location>
    <ligand>
        <name>Mg(2+)</name>
        <dbReference type="ChEBI" id="CHEBI:18420"/>
        <note>ligand shared with MT-CO1</note>
    </ligand>
</feature>
<feature type="binding site" evidence="3">
    <location>
        <position position="200"/>
    </location>
    <ligand>
        <name>Cu cation</name>
        <dbReference type="ChEBI" id="CHEBI:23378"/>
        <label>A1</label>
    </ligand>
</feature>
<feature type="binding site" evidence="3">
    <location>
        <position position="200"/>
    </location>
    <ligand>
        <name>Cu cation</name>
        <dbReference type="ChEBI" id="CHEBI:23378"/>
        <label>A2</label>
    </ligand>
</feature>
<feature type="binding site" evidence="3">
    <location>
        <position position="204"/>
    </location>
    <ligand>
        <name>Cu cation</name>
        <dbReference type="ChEBI" id="CHEBI:23378"/>
        <label>A2</label>
    </ligand>
</feature>
<feature type="binding site" evidence="3">
    <location>
        <position position="207"/>
    </location>
    <ligand>
        <name>Cu cation</name>
        <dbReference type="ChEBI" id="CHEBI:23378"/>
        <label>A1</label>
    </ligand>
</feature>
<dbReference type="EC" id="7.1.1.9"/>
<dbReference type="EMBL" id="AF147589">
    <property type="protein sequence ID" value="AAG42582.1"/>
    <property type="molecule type" value="Genomic_DNA"/>
</dbReference>
<dbReference type="RefSeq" id="YP_009332052.1">
    <property type="nucleotide sequence ID" value="NC_032372.1"/>
</dbReference>
<dbReference type="SMR" id="Q7IZ15"/>
<dbReference type="GeneID" id="30688870"/>
<dbReference type="CTD" id="4513"/>
<dbReference type="GO" id="GO:0005743">
    <property type="term" value="C:mitochondrial inner membrane"/>
    <property type="evidence" value="ECO:0007669"/>
    <property type="project" value="UniProtKB-SubCell"/>
</dbReference>
<dbReference type="GO" id="GO:0045277">
    <property type="term" value="C:respiratory chain complex IV"/>
    <property type="evidence" value="ECO:0000250"/>
    <property type="project" value="UniProtKB"/>
</dbReference>
<dbReference type="GO" id="GO:0005507">
    <property type="term" value="F:copper ion binding"/>
    <property type="evidence" value="ECO:0007669"/>
    <property type="project" value="InterPro"/>
</dbReference>
<dbReference type="GO" id="GO:0004129">
    <property type="term" value="F:cytochrome-c oxidase activity"/>
    <property type="evidence" value="ECO:0007669"/>
    <property type="project" value="UniProtKB-EC"/>
</dbReference>
<dbReference type="GO" id="GO:0042773">
    <property type="term" value="P:ATP synthesis coupled electron transport"/>
    <property type="evidence" value="ECO:0007669"/>
    <property type="project" value="TreeGrafter"/>
</dbReference>
<dbReference type="CDD" id="cd13912">
    <property type="entry name" value="CcO_II_C"/>
    <property type="match status" value="1"/>
</dbReference>
<dbReference type="FunFam" id="1.10.287.90:FF:000001">
    <property type="entry name" value="Cytochrome c oxidase subunit 2"/>
    <property type="match status" value="1"/>
</dbReference>
<dbReference type="FunFam" id="2.60.40.420:FF:000001">
    <property type="entry name" value="Cytochrome c oxidase subunit 2"/>
    <property type="match status" value="1"/>
</dbReference>
<dbReference type="Gene3D" id="1.10.287.90">
    <property type="match status" value="1"/>
</dbReference>
<dbReference type="Gene3D" id="2.60.40.420">
    <property type="entry name" value="Cupredoxins - blue copper proteins"/>
    <property type="match status" value="1"/>
</dbReference>
<dbReference type="InterPro" id="IPR045187">
    <property type="entry name" value="CcO_II"/>
</dbReference>
<dbReference type="InterPro" id="IPR002429">
    <property type="entry name" value="CcO_II-like_C"/>
</dbReference>
<dbReference type="InterPro" id="IPR034210">
    <property type="entry name" value="CcO_II_C"/>
</dbReference>
<dbReference type="InterPro" id="IPR001505">
    <property type="entry name" value="Copper_CuA"/>
</dbReference>
<dbReference type="InterPro" id="IPR008972">
    <property type="entry name" value="Cupredoxin"/>
</dbReference>
<dbReference type="InterPro" id="IPR014222">
    <property type="entry name" value="Cyt_c_oxidase_su2"/>
</dbReference>
<dbReference type="InterPro" id="IPR011759">
    <property type="entry name" value="Cyt_c_oxidase_su2_TM_dom"/>
</dbReference>
<dbReference type="InterPro" id="IPR036257">
    <property type="entry name" value="Cyt_c_oxidase_su2_TM_sf"/>
</dbReference>
<dbReference type="NCBIfam" id="TIGR02866">
    <property type="entry name" value="CoxB"/>
    <property type="match status" value="1"/>
</dbReference>
<dbReference type="PANTHER" id="PTHR22888:SF9">
    <property type="entry name" value="CYTOCHROME C OXIDASE SUBUNIT 2"/>
    <property type="match status" value="1"/>
</dbReference>
<dbReference type="PANTHER" id="PTHR22888">
    <property type="entry name" value="CYTOCHROME C OXIDASE, SUBUNIT II"/>
    <property type="match status" value="1"/>
</dbReference>
<dbReference type="Pfam" id="PF00116">
    <property type="entry name" value="COX2"/>
    <property type="match status" value="1"/>
</dbReference>
<dbReference type="Pfam" id="PF02790">
    <property type="entry name" value="COX2_TM"/>
    <property type="match status" value="1"/>
</dbReference>
<dbReference type="PRINTS" id="PR01166">
    <property type="entry name" value="CYCOXIDASEII"/>
</dbReference>
<dbReference type="SUPFAM" id="SSF49503">
    <property type="entry name" value="Cupredoxins"/>
    <property type="match status" value="1"/>
</dbReference>
<dbReference type="SUPFAM" id="SSF81464">
    <property type="entry name" value="Cytochrome c oxidase subunit II-like, transmembrane region"/>
    <property type="match status" value="1"/>
</dbReference>
<dbReference type="PROSITE" id="PS00078">
    <property type="entry name" value="COX2"/>
    <property type="match status" value="1"/>
</dbReference>
<dbReference type="PROSITE" id="PS50857">
    <property type="entry name" value="COX2_CUA"/>
    <property type="match status" value="1"/>
</dbReference>
<dbReference type="PROSITE" id="PS50999">
    <property type="entry name" value="COX2_TM"/>
    <property type="match status" value="1"/>
</dbReference>
<gene>
    <name type="primary">MT-CO2</name>
    <name type="synonym">COII</name>
    <name type="synonym">COX2</name>
    <name type="synonym">COXII</name>
    <name type="synonym">MTCO2</name>
</gene>
<keyword id="KW-0186">Copper</keyword>
<keyword id="KW-0249">Electron transport</keyword>
<keyword id="KW-0460">Magnesium</keyword>
<keyword id="KW-0472">Membrane</keyword>
<keyword id="KW-0479">Metal-binding</keyword>
<keyword id="KW-0496">Mitochondrion</keyword>
<keyword id="KW-0999">Mitochondrion inner membrane</keyword>
<keyword id="KW-0679">Respiratory chain</keyword>
<keyword id="KW-1278">Translocase</keyword>
<keyword id="KW-0812">Transmembrane</keyword>
<keyword id="KW-1133">Transmembrane helix</keyword>
<keyword id="KW-0813">Transport</keyword>
<organism>
    <name type="scientific">Tamias canipes</name>
    <name type="common">Gray-footed chipmunk</name>
    <dbReference type="NCBI Taxonomy" id="45466"/>
    <lineage>
        <taxon>Eukaryota</taxon>
        <taxon>Metazoa</taxon>
        <taxon>Chordata</taxon>
        <taxon>Craniata</taxon>
        <taxon>Vertebrata</taxon>
        <taxon>Euteleostomi</taxon>
        <taxon>Mammalia</taxon>
        <taxon>Eutheria</taxon>
        <taxon>Euarchontoglires</taxon>
        <taxon>Glires</taxon>
        <taxon>Rodentia</taxon>
        <taxon>Sciuromorpha</taxon>
        <taxon>Sciuridae</taxon>
        <taxon>Xerinae</taxon>
        <taxon>Marmotini</taxon>
        <taxon>Tamias</taxon>
    </lineage>
</organism>
<name>COX2_TAMCA</name>
<sequence length="227" mass="25933">MAYPFELGFQDATSPIMEELLHFHDHTLMIVFLISSLVLYIISLMLTTKLTHTSTMDAQEVETIWTILPAIILILIALPSLRILYMMDEINDPSLTVKTMGHQWYWSYEYTDYEDLNFDSYMIPTSDLSPGELRLLEVDNRVVLPMELPIRMLISSEDVLHSWAVPSLGLKTDAIPGRLNQATLTSTRPGLYYGQCSEICGSNHSFMPIVLELVPLKHFENWSSSML</sequence>
<accession>Q7IZ15</accession>
<proteinExistence type="inferred from homology"/>
<reference key="1">
    <citation type="journal article" date="2000" name="J. Mammal. Evol.">
        <title>Molecular phylogeny of the chipmunk genus Tamias based on the mitochondrial cytochrome oxidase subunit II gene.</title>
        <authorList>
            <person name="Piaggio A.J."/>
            <person name="Spicer G.S."/>
        </authorList>
    </citation>
    <scope>NUCLEOTIDE SEQUENCE [GENOMIC DNA]</scope>
</reference>
<evidence type="ECO:0000250" key="1">
    <source>
        <dbReference type="UniProtKB" id="P00403"/>
    </source>
</evidence>
<evidence type="ECO:0000250" key="2">
    <source>
        <dbReference type="UniProtKB" id="P00410"/>
    </source>
</evidence>
<evidence type="ECO:0000250" key="3">
    <source>
        <dbReference type="UniProtKB" id="P68530"/>
    </source>
</evidence>
<evidence type="ECO:0000305" key="4"/>
<geneLocation type="mitochondrion"/>